<comment type="similarity">
    <text evidence="2">Belongs to the MacroD-type family.</text>
</comment>
<keyword id="KW-1185">Reference proteome</keyword>
<feature type="chain" id="PRO_0000089195" description="Macro domain-containing protein lp_3408">
    <location>
        <begin position="1"/>
        <end position="172"/>
    </location>
</feature>
<feature type="domain" description="Macro" evidence="1">
    <location>
        <begin position="1"/>
        <end position="171"/>
    </location>
</feature>
<organism>
    <name type="scientific">Lactiplantibacillus plantarum (strain ATCC BAA-793 / NCIMB 8826 / WCFS1)</name>
    <name type="common">Lactobacillus plantarum</name>
    <dbReference type="NCBI Taxonomy" id="220668"/>
    <lineage>
        <taxon>Bacteria</taxon>
        <taxon>Bacillati</taxon>
        <taxon>Bacillota</taxon>
        <taxon>Bacilli</taxon>
        <taxon>Lactobacillales</taxon>
        <taxon>Lactobacillaceae</taxon>
        <taxon>Lactiplantibacillus</taxon>
    </lineage>
</organism>
<proteinExistence type="inferred from homology"/>
<dbReference type="EMBL" id="AL935263">
    <property type="protein sequence ID" value="CCC80389.1"/>
    <property type="molecule type" value="Genomic_DNA"/>
</dbReference>
<dbReference type="RefSeq" id="WP_003645538.1">
    <property type="nucleotide sequence ID" value="NC_004567.2"/>
</dbReference>
<dbReference type="RefSeq" id="YP_004890903.1">
    <property type="nucleotide sequence ID" value="NC_004567.2"/>
</dbReference>
<dbReference type="SMR" id="Q88SK6"/>
<dbReference type="STRING" id="220668.lp_3408"/>
<dbReference type="EnsemblBacteria" id="CCC80389">
    <property type="protein sequence ID" value="CCC80389"/>
    <property type="gene ID" value="lp_3408"/>
</dbReference>
<dbReference type="KEGG" id="lpl:lp_3408"/>
<dbReference type="PATRIC" id="fig|220668.9.peg.2838"/>
<dbReference type="eggNOG" id="COG2110">
    <property type="taxonomic scope" value="Bacteria"/>
</dbReference>
<dbReference type="HOGENOM" id="CLU_046550_5_1_9"/>
<dbReference type="OrthoDB" id="6194521at2"/>
<dbReference type="PhylomeDB" id="Q88SK6"/>
<dbReference type="Proteomes" id="UP000000432">
    <property type="component" value="Chromosome"/>
</dbReference>
<dbReference type="CDD" id="cd02908">
    <property type="entry name" value="Macro_OAADPr_deacetylase"/>
    <property type="match status" value="1"/>
</dbReference>
<dbReference type="Gene3D" id="3.40.220.10">
    <property type="entry name" value="Leucine Aminopeptidase, subunit E, domain 1"/>
    <property type="match status" value="1"/>
</dbReference>
<dbReference type="InterPro" id="IPR002589">
    <property type="entry name" value="Macro_dom"/>
</dbReference>
<dbReference type="InterPro" id="IPR043472">
    <property type="entry name" value="Macro_dom-like"/>
</dbReference>
<dbReference type="NCBIfam" id="NF001664">
    <property type="entry name" value="PRK00431.1-6"/>
    <property type="match status" value="1"/>
</dbReference>
<dbReference type="PANTHER" id="PTHR11106">
    <property type="entry name" value="GANGLIOSIDE INDUCED DIFFERENTIATION ASSOCIATED PROTEIN 2-RELATED"/>
    <property type="match status" value="1"/>
</dbReference>
<dbReference type="PANTHER" id="PTHR11106:SF27">
    <property type="entry name" value="MACRO DOMAIN-CONTAINING PROTEIN"/>
    <property type="match status" value="1"/>
</dbReference>
<dbReference type="Pfam" id="PF01661">
    <property type="entry name" value="Macro"/>
    <property type="match status" value="1"/>
</dbReference>
<dbReference type="SMART" id="SM00506">
    <property type="entry name" value="A1pp"/>
    <property type="match status" value="1"/>
</dbReference>
<dbReference type="SUPFAM" id="SSF52949">
    <property type="entry name" value="Macro domain-like"/>
    <property type="match status" value="1"/>
</dbReference>
<dbReference type="PROSITE" id="PS51154">
    <property type="entry name" value="MACRO"/>
    <property type="match status" value="1"/>
</dbReference>
<protein>
    <recommendedName>
        <fullName>Macro domain-containing protein lp_3408</fullName>
    </recommendedName>
</protein>
<evidence type="ECO:0000255" key="1">
    <source>
        <dbReference type="PROSITE-ProRule" id="PRU00490"/>
    </source>
</evidence>
<evidence type="ECO:0000305" key="2"/>
<accession>Q88SK6</accession>
<accession>F9UU87</accession>
<sequence>MVEIKVIHGDITKMTVDAIVNAANTSLLGGGGVDGAIHRAAGPALLAACRPLHGCATGEAKITPGFRLPAKYVIHTPGPVWQGGQHNELQLLANSYRNSLNLAAENHCQTVAFPSISTGVYHFPLSIAAPLALKTLQATAQTTAHTVQTITIVCFDDQTQNVFSTALAALTN</sequence>
<name>Y3408_LACPL</name>
<reference key="1">
    <citation type="journal article" date="2003" name="Proc. Natl. Acad. Sci. U.S.A.">
        <title>Complete genome sequence of Lactobacillus plantarum WCFS1.</title>
        <authorList>
            <person name="Kleerebezem M."/>
            <person name="Boekhorst J."/>
            <person name="van Kranenburg R."/>
            <person name="Molenaar D."/>
            <person name="Kuipers O.P."/>
            <person name="Leer R."/>
            <person name="Tarchini R."/>
            <person name="Peters S.A."/>
            <person name="Sandbrink H.M."/>
            <person name="Fiers M.W.E.J."/>
            <person name="Stiekema W."/>
            <person name="Klein Lankhorst R.M."/>
            <person name="Bron P.A."/>
            <person name="Hoffer S.M."/>
            <person name="Nierop Groot M.N."/>
            <person name="Kerkhoven R."/>
            <person name="De Vries M."/>
            <person name="Ursing B."/>
            <person name="De Vos W.M."/>
            <person name="Siezen R.J."/>
        </authorList>
    </citation>
    <scope>NUCLEOTIDE SEQUENCE [LARGE SCALE GENOMIC DNA]</scope>
    <source>
        <strain>ATCC BAA-793 / NCIMB 8826 / WCFS1</strain>
    </source>
</reference>
<reference key="2">
    <citation type="journal article" date="2012" name="J. Bacteriol.">
        <title>Complete resequencing and reannotation of the Lactobacillus plantarum WCFS1 genome.</title>
        <authorList>
            <person name="Siezen R.J."/>
            <person name="Francke C."/>
            <person name="Renckens B."/>
            <person name="Boekhorst J."/>
            <person name="Wels M."/>
            <person name="Kleerebezem M."/>
            <person name="van Hijum S.A."/>
        </authorList>
    </citation>
    <scope>NUCLEOTIDE SEQUENCE [LARGE SCALE GENOMIC DNA]</scope>
    <scope>GENOME REANNOTATION</scope>
    <source>
        <strain>ATCC BAA-793 / NCIMB 8826 / WCFS1</strain>
    </source>
</reference>
<gene>
    <name type="ordered locus">lp_3408</name>
</gene>